<evidence type="ECO:0000255" key="1">
    <source>
        <dbReference type="HAMAP-Rule" id="MF_00685"/>
    </source>
</evidence>
<keyword id="KW-0119">Carbohydrate metabolism</keyword>
<keyword id="KW-0320">Glycogen biosynthesis</keyword>
<keyword id="KW-0321">Glycogen metabolism</keyword>
<keyword id="KW-0328">Glycosyltransferase</keyword>
<keyword id="KW-1185">Reference proteome</keyword>
<keyword id="KW-0808">Transferase</keyword>
<organism>
    <name type="scientific">Synechococcus sp. (strain RCC307)</name>
    <dbReference type="NCBI Taxonomy" id="316278"/>
    <lineage>
        <taxon>Bacteria</taxon>
        <taxon>Bacillati</taxon>
        <taxon>Cyanobacteriota</taxon>
        <taxon>Cyanophyceae</taxon>
        <taxon>Synechococcales</taxon>
        <taxon>Synechococcaceae</taxon>
        <taxon>Synechococcus</taxon>
    </lineage>
</organism>
<comment type="function">
    <text evidence="1">Catalyzes the formation of the alpha-1,6-glucosidic linkages in glycogen by scission of a 1,4-alpha-linked oligosaccharide from growing alpha-1,4-glucan chains and the subsequent attachment of the oligosaccharide to the alpha-1,6 position.</text>
</comment>
<comment type="catalytic activity">
    <reaction evidence="1">
        <text>Transfers a segment of a (1-&gt;4)-alpha-D-glucan chain to a primary hydroxy group in a similar glucan chain.</text>
        <dbReference type="EC" id="2.4.1.18"/>
    </reaction>
</comment>
<comment type="pathway">
    <text evidence="1">Glycan biosynthesis; glycogen biosynthesis.</text>
</comment>
<comment type="subunit">
    <text evidence="1">Monomer.</text>
</comment>
<comment type="similarity">
    <text evidence="1">Belongs to the glycosyl hydrolase 13 family. GlgB subfamily.</text>
</comment>
<feature type="chain" id="PRO_1000045005" description="1,4-alpha-glucan branching enzyme GlgB">
    <location>
        <begin position="1"/>
        <end position="772"/>
    </location>
</feature>
<feature type="active site" description="Nucleophile" evidence="1">
    <location>
        <position position="431"/>
    </location>
</feature>
<feature type="active site" description="Proton donor" evidence="1">
    <location>
        <position position="484"/>
    </location>
</feature>
<reference key="1">
    <citation type="submission" date="2006-05" db="EMBL/GenBank/DDBJ databases">
        <authorList>
            <consortium name="Genoscope"/>
        </authorList>
    </citation>
    <scope>NUCLEOTIDE SEQUENCE [LARGE SCALE GENOMIC DNA]</scope>
    <source>
        <strain>RCC307</strain>
    </source>
</reference>
<sequence>MALATLDWMSKDAERLAQCNHDHPQAVLGPQQLEDGRWVVRVWMPEASRVVLLHQGHEHALENPHHAWIFEGELSSNPGSQYRLRVERAGITHEQHDPYAFRQEWMGAMDRHLFAEGNHHHIWQRMGAHPHLQDGVAGVQFCLWAPNARSVSVIGDCTNWDGRHLPMQQRIGGIWELFVPGLGAGAHYKYEIHTQQGHCYEKADPYGFQHEVRPAQASVVASLKGYQWGDDAWLKQRDNRNPLEQPVSVYEMHMGSWMHGSWDEPYIEADGTPRAPVPAADLKPGARLLTYPELADRVIPYVKARGFTHIELMPMAEHPFDGSWGYQVTGFYAPTSRFGTLDEFRAFVDRCHAEGIGVILDWVPGHFPKDAHGLAFFDGSHLYEHGDPRIGEHKEWGTLIFNYSRNEVRNFLVANLVFWFEELHIDGIRVDAVASMLYRDYLRPDGEWIANEHGGRENLEAVRFLQQANSVLFHYFPGALSIAEESTTWPLVTMPTSMGGLGFNLKWNMGWMHDMLDYFELDHWFRQFHQNNITFSIWYAHTENFMLALSHDEVVHGKSHLLHKMPGSDELKFANVRALLTYMWTHPGKKTIFMGMEFAQRGEWNVWGDLEWDKLQFPEHQGVVNLVDDLNALYKSEPALWRNDFDSFGFQWIDCDDTNHSVVSFMRRDEKEGNWVVVVCNFTPEGHGNYRIGVPVDGFYTELFNSDGARYGGSNQGNLGGKFSDDWGMHSYGQSLDLCLPPLTVMVFKHDPNRQREAAKDEAAAKLGGSLG</sequence>
<dbReference type="EC" id="2.4.1.18" evidence="1"/>
<dbReference type="EMBL" id="CT978603">
    <property type="protein sequence ID" value="CAK27823.1"/>
    <property type="molecule type" value="Genomic_DNA"/>
</dbReference>
<dbReference type="SMR" id="A5GSG4"/>
<dbReference type="STRING" id="316278.SynRCC307_0920"/>
<dbReference type="CAZy" id="CBM48">
    <property type="family name" value="Carbohydrate-Binding Module Family 48"/>
</dbReference>
<dbReference type="CAZy" id="GH13">
    <property type="family name" value="Glycoside Hydrolase Family 13"/>
</dbReference>
<dbReference type="KEGG" id="syr:SynRCC307_0920"/>
<dbReference type="eggNOG" id="COG0296">
    <property type="taxonomic scope" value="Bacteria"/>
</dbReference>
<dbReference type="HOGENOM" id="CLU_004245_3_2_3"/>
<dbReference type="OrthoDB" id="9800174at2"/>
<dbReference type="UniPathway" id="UPA00164"/>
<dbReference type="Proteomes" id="UP000001115">
    <property type="component" value="Chromosome"/>
</dbReference>
<dbReference type="GO" id="GO:0005829">
    <property type="term" value="C:cytosol"/>
    <property type="evidence" value="ECO:0007669"/>
    <property type="project" value="TreeGrafter"/>
</dbReference>
<dbReference type="GO" id="GO:0003844">
    <property type="term" value="F:1,4-alpha-glucan branching enzyme activity"/>
    <property type="evidence" value="ECO:0007669"/>
    <property type="project" value="UniProtKB-UniRule"/>
</dbReference>
<dbReference type="GO" id="GO:0043169">
    <property type="term" value="F:cation binding"/>
    <property type="evidence" value="ECO:0007669"/>
    <property type="project" value="InterPro"/>
</dbReference>
<dbReference type="GO" id="GO:0004553">
    <property type="term" value="F:hydrolase activity, hydrolyzing O-glycosyl compounds"/>
    <property type="evidence" value="ECO:0007669"/>
    <property type="project" value="InterPro"/>
</dbReference>
<dbReference type="GO" id="GO:0005978">
    <property type="term" value="P:glycogen biosynthetic process"/>
    <property type="evidence" value="ECO:0007669"/>
    <property type="project" value="UniProtKB-UniRule"/>
</dbReference>
<dbReference type="CDD" id="cd11322">
    <property type="entry name" value="AmyAc_Glg_BE"/>
    <property type="match status" value="1"/>
</dbReference>
<dbReference type="CDD" id="cd02855">
    <property type="entry name" value="E_set_GBE_prok_N"/>
    <property type="match status" value="1"/>
</dbReference>
<dbReference type="FunFam" id="2.60.40.10:FF:000169">
    <property type="entry name" value="1,4-alpha-glucan branching enzyme GlgB"/>
    <property type="match status" value="1"/>
</dbReference>
<dbReference type="FunFam" id="2.60.40.1180:FF:000002">
    <property type="entry name" value="1,4-alpha-glucan branching enzyme GlgB"/>
    <property type="match status" value="1"/>
</dbReference>
<dbReference type="FunFam" id="3.20.20.80:FF:000003">
    <property type="entry name" value="1,4-alpha-glucan branching enzyme GlgB"/>
    <property type="match status" value="1"/>
</dbReference>
<dbReference type="Gene3D" id="3.20.20.80">
    <property type="entry name" value="Glycosidases"/>
    <property type="match status" value="1"/>
</dbReference>
<dbReference type="Gene3D" id="2.60.40.1180">
    <property type="entry name" value="Golgi alpha-mannosidase II"/>
    <property type="match status" value="1"/>
</dbReference>
<dbReference type="Gene3D" id="2.60.40.10">
    <property type="entry name" value="Immunoglobulins"/>
    <property type="match status" value="2"/>
</dbReference>
<dbReference type="HAMAP" id="MF_00685">
    <property type="entry name" value="GlgB"/>
    <property type="match status" value="1"/>
</dbReference>
<dbReference type="InterPro" id="IPR006048">
    <property type="entry name" value="A-amylase/branching_C"/>
</dbReference>
<dbReference type="InterPro" id="IPR037439">
    <property type="entry name" value="Branching_enzy"/>
</dbReference>
<dbReference type="InterPro" id="IPR006407">
    <property type="entry name" value="GlgB"/>
</dbReference>
<dbReference type="InterPro" id="IPR054169">
    <property type="entry name" value="GlgB_N"/>
</dbReference>
<dbReference type="InterPro" id="IPR044143">
    <property type="entry name" value="GlgB_N_E_set_prok"/>
</dbReference>
<dbReference type="InterPro" id="IPR006047">
    <property type="entry name" value="Glyco_hydro_13_cat_dom"/>
</dbReference>
<dbReference type="InterPro" id="IPR004193">
    <property type="entry name" value="Glyco_hydro_13_N"/>
</dbReference>
<dbReference type="InterPro" id="IPR013780">
    <property type="entry name" value="Glyco_hydro_b"/>
</dbReference>
<dbReference type="InterPro" id="IPR017853">
    <property type="entry name" value="Glycoside_hydrolase_SF"/>
</dbReference>
<dbReference type="InterPro" id="IPR013783">
    <property type="entry name" value="Ig-like_fold"/>
</dbReference>
<dbReference type="InterPro" id="IPR014756">
    <property type="entry name" value="Ig_E-set"/>
</dbReference>
<dbReference type="NCBIfam" id="TIGR01515">
    <property type="entry name" value="branching_enzym"/>
    <property type="match status" value="1"/>
</dbReference>
<dbReference type="NCBIfam" id="NF003811">
    <property type="entry name" value="PRK05402.1"/>
    <property type="match status" value="1"/>
</dbReference>
<dbReference type="NCBIfam" id="NF008967">
    <property type="entry name" value="PRK12313.1"/>
    <property type="match status" value="1"/>
</dbReference>
<dbReference type="PANTHER" id="PTHR43651">
    <property type="entry name" value="1,4-ALPHA-GLUCAN-BRANCHING ENZYME"/>
    <property type="match status" value="1"/>
</dbReference>
<dbReference type="PANTHER" id="PTHR43651:SF3">
    <property type="entry name" value="1,4-ALPHA-GLUCAN-BRANCHING ENZYME"/>
    <property type="match status" value="1"/>
</dbReference>
<dbReference type="Pfam" id="PF00128">
    <property type="entry name" value="Alpha-amylase"/>
    <property type="match status" value="2"/>
</dbReference>
<dbReference type="Pfam" id="PF02806">
    <property type="entry name" value="Alpha-amylase_C"/>
    <property type="match status" value="1"/>
</dbReference>
<dbReference type="Pfam" id="PF02922">
    <property type="entry name" value="CBM_48"/>
    <property type="match status" value="1"/>
</dbReference>
<dbReference type="Pfam" id="PF22019">
    <property type="entry name" value="GlgB_N"/>
    <property type="match status" value="1"/>
</dbReference>
<dbReference type="PIRSF" id="PIRSF000463">
    <property type="entry name" value="GlgB"/>
    <property type="match status" value="1"/>
</dbReference>
<dbReference type="SMART" id="SM00642">
    <property type="entry name" value="Aamy"/>
    <property type="match status" value="1"/>
</dbReference>
<dbReference type="SUPFAM" id="SSF51445">
    <property type="entry name" value="(Trans)glycosidases"/>
    <property type="match status" value="1"/>
</dbReference>
<dbReference type="SUPFAM" id="SSF81296">
    <property type="entry name" value="E set domains"/>
    <property type="match status" value="2"/>
</dbReference>
<dbReference type="SUPFAM" id="SSF51011">
    <property type="entry name" value="Glycosyl hydrolase domain"/>
    <property type="match status" value="1"/>
</dbReference>
<accession>A5GSG4</accession>
<gene>
    <name evidence="1" type="primary">glgB</name>
    <name type="ordered locus">SynRCC307_0920</name>
</gene>
<name>GLGB_SYNR3</name>
<protein>
    <recommendedName>
        <fullName evidence="1">1,4-alpha-glucan branching enzyme GlgB</fullName>
        <ecNumber evidence="1">2.4.1.18</ecNumber>
    </recommendedName>
    <alternativeName>
        <fullName evidence="1">1,4-alpha-D-glucan:1,4-alpha-D-glucan 6-glucosyl-transferase</fullName>
    </alternativeName>
    <alternativeName>
        <fullName evidence="1">Alpha-(1-&gt;4)-glucan branching enzyme</fullName>
    </alternativeName>
    <alternativeName>
        <fullName evidence="1">Glycogen branching enzyme</fullName>
        <shortName evidence="1">BE</shortName>
    </alternativeName>
</protein>
<proteinExistence type="inferred from homology"/>